<sequence>MTTKLEQLRKLTTVVADTGDIEAIAKYTPEDATTNPSLILKAAEITEYAPLIDASIEYAKAQSNDKAQQVQDTCDMLAVNIGKEILKVVPGRISTEVDARLSYDTEGSVAKARQLIKMYNDAGITNDRILIKLASTWEGIRAAEILEKEGINCNLTLLFSFAQARACAEAGVYLISPFVGRIMDWYKAKEGRDFEPSEDPGVVSVTGIYNYYKEHGYNTVVMGASFRNIGEILELAGCDRLTISPNLLQELEEATGEVVEKLVDTNGNKARPAAMTHAEFLWDHNQDAMAVEKLAEGIRNFAVDQGKLEAMIATKL</sequence>
<protein>
    <recommendedName>
        <fullName evidence="2">Transaldolase</fullName>
        <ecNumber evidence="2">2.2.1.2</ecNumber>
    </recommendedName>
</protein>
<evidence type="ECO:0000250" key="1"/>
<evidence type="ECO:0000255" key="2">
    <source>
        <dbReference type="HAMAP-Rule" id="MF_00492"/>
    </source>
</evidence>
<accession>Q5DZP1</accession>
<dbReference type="EC" id="2.2.1.2" evidence="2"/>
<dbReference type="EMBL" id="CP000021">
    <property type="protein sequence ID" value="AAW87755.1"/>
    <property type="molecule type" value="Genomic_DNA"/>
</dbReference>
<dbReference type="RefSeq" id="WP_011263519.1">
    <property type="nucleotide sequence ID" value="NC_006841.2"/>
</dbReference>
<dbReference type="RefSeq" id="YP_206643.1">
    <property type="nucleotide sequence ID" value="NC_006841.2"/>
</dbReference>
<dbReference type="SMR" id="Q5DZP1"/>
<dbReference type="STRING" id="312309.VF_A0685"/>
<dbReference type="EnsemblBacteria" id="AAW87755">
    <property type="protein sequence ID" value="AAW87755"/>
    <property type="gene ID" value="VF_A0685"/>
</dbReference>
<dbReference type="GeneID" id="54166004"/>
<dbReference type="KEGG" id="vfi:VF_A0685"/>
<dbReference type="PATRIC" id="fig|312309.11.peg.3287"/>
<dbReference type="eggNOG" id="COG0176">
    <property type="taxonomic scope" value="Bacteria"/>
</dbReference>
<dbReference type="HOGENOM" id="CLU_047470_0_1_6"/>
<dbReference type="OrthoDB" id="9809101at2"/>
<dbReference type="UniPathway" id="UPA00115">
    <property type="reaction ID" value="UER00414"/>
</dbReference>
<dbReference type="Proteomes" id="UP000000537">
    <property type="component" value="Chromosome II"/>
</dbReference>
<dbReference type="GO" id="GO:0005829">
    <property type="term" value="C:cytosol"/>
    <property type="evidence" value="ECO:0007669"/>
    <property type="project" value="TreeGrafter"/>
</dbReference>
<dbReference type="GO" id="GO:0004801">
    <property type="term" value="F:transaldolase activity"/>
    <property type="evidence" value="ECO:0000250"/>
    <property type="project" value="UniProtKB"/>
</dbReference>
<dbReference type="GO" id="GO:0005975">
    <property type="term" value="P:carbohydrate metabolic process"/>
    <property type="evidence" value="ECO:0007669"/>
    <property type="project" value="InterPro"/>
</dbReference>
<dbReference type="GO" id="GO:0006098">
    <property type="term" value="P:pentose-phosphate shunt"/>
    <property type="evidence" value="ECO:0007669"/>
    <property type="project" value="UniProtKB-UniRule"/>
</dbReference>
<dbReference type="CDD" id="cd00957">
    <property type="entry name" value="Transaldolase_TalAB"/>
    <property type="match status" value="1"/>
</dbReference>
<dbReference type="FunFam" id="3.20.20.70:FF:000002">
    <property type="entry name" value="Transaldolase"/>
    <property type="match status" value="1"/>
</dbReference>
<dbReference type="Gene3D" id="3.20.20.70">
    <property type="entry name" value="Aldolase class I"/>
    <property type="match status" value="1"/>
</dbReference>
<dbReference type="HAMAP" id="MF_00492">
    <property type="entry name" value="Transaldolase_1"/>
    <property type="match status" value="1"/>
</dbReference>
<dbReference type="InterPro" id="IPR013785">
    <property type="entry name" value="Aldolase_TIM"/>
</dbReference>
<dbReference type="InterPro" id="IPR001585">
    <property type="entry name" value="TAL/FSA"/>
</dbReference>
<dbReference type="InterPro" id="IPR004730">
    <property type="entry name" value="Transaldolase_1"/>
</dbReference>
<dbReference type="InterPro" id="IPR018225">
    <property type="entry name" value="Transaldolase_AS"/>
</dbReference>
<dbReference type="NCBIfam" id="NF009001">
    <property type="entry name" value="PRK12346.1"/>
    <property type="match status" value="1"/>
</dbReference>
<dbReference type="NCBIfam" id="TIGR00874">
    <property type="entry name" value="talAB"/>
    <property type="match status" value="1"/>
</dbReference>
<dbReference type="PANTHER" id="PTHR10683">
    <property type="entry name" value="TRANSALDOLASE"/>
    <property type="match status" value="1"/>
</dbReference>
<dbReference type="PANTHER" id="PTHR10683:SF18">
    <property type="entry name" value="TRANSALDOLASE"/>
    <property type="match status" value="1"/>
</dbReference>
<dbReference type="Pfam" id="PF00923">
    <property type="entry name" value="TAL_FSA"/>
    <property type="match status" value="1"/>
</dbReference>
<dbReference type="SUPFAM" id="SSF51569">
    <property type="entry name" value="Aldolase"/>
    <property type="match status" value="1"/>
</dbReference>
<dbReference type="PROSITE" id="PS01054">
    <property type="entry name" value="TRANSALDOLASE_1"/>
    <property type="match status" value="1"/>
</dbReference>
<dbReference type="PROSITE" id="PS00958">
    <property type="entry name" value="TRANSALDOLASE_2"/>
    <property type="match status" value="1"/>
</dbReference>
<gene>
    <name evidence="2" type="primary">tal</name>
    <name type="ordered locus">VF_A0685</name>
</gene>
<organism>
    <name type="scientific">Aliivibrio fischeri (strain ATCC 700601 / ES114)</name>
    <name type="common">Vibrio fischeri</name>
    <dbReference type="NCBI Taxonomy" id="312309"/>
    <lineage>
        <taxon>Bacteria</taxon>
        <taxon>Pseudomonadati</taxon>
        <taxon>Pseudomonadota</taxon>
        <taxon>Gammaproteobacteria</taxon>
        <taxon>Vibrionales</taxon>
        <taxon>Vibrionaceae</taxon>
        <taxon>Aliivibrio</taxon>
    </lineage>
</organism>
<feature type="chain" id="PRO_0000230976" description="Transaldolase">
    <location>
        <begin position="1"/>
        <end position="316"/>
    </location>
</feature>
<feature type="active site" description="Schiff-base intermediate with substrate" evidence="2">
    <location>
        <position position="132"/>
    </location>
</feature>
<keyword id="KW-0963">Cytoplasm</keyword>
<keyword id="KW-0570">Pentose shunt</keyword>
<keyword id="KW-1185">Reference proteome</keyword>
<keyword id="KW-0704">Schiff base</keyword>
<keyword id="KW-0808">Transferase</keyword>
<comment type="function">
    <text evidence="2">Transaldolase is important for the balance of metabolites in the pentose-phosphate pathway.</text>
</comment>
<comment type="catalytic activity">
    <reaction evidence="2">
        <text>D-sedoheptulose 7-phosphate + D-glyceraldehyde 3-phosphate = D-erythrose 4-phosphate + beta-D-fructose 6-phosphate</text>
        <dbReference type="Rhea" id="RHEA:17053"/>
        <dbReference type="ChEBI" id="CHEBI:16897"/>
        <dbReference type="ChEBI" id="CHEBI:57483"/>
        <dbReference type="ChEBI" id="CHEBI:57634"/>
        <dbReference type="ChEBI" id="CHEBI:59776"/>
        <dbReference type="EC" id="2.2.1.2"/>
    </reaction>
</comment>
<comment type="pathway">
    <text evidence="2">Carbohydrate degradation; pentose phosphate pathway; D-glyceraldehyde 3-phosphate and beta-D-fructose 6-phosphate from D-ribose 5-phosphate and D-xylulose 5-phosphate (non-oxidative stage): step 2/3.</text>
</comment>
<comment type="subunit">
    <text evidence="1">Homodimer.</text>
</comment>
<comment type="subcellular location">
    <subcellularLocation>
        <location evidence="2">Cytoplasm</location>
    </subcellularLocation>
</comment>
<comment type="similarity">
    <text evidence="2">Belongs to the transaldolase family. Type 1 subfamily.</text>
</comment>
<proteinExistence type="inferred from homology"/>
<name>TAL_ALIF1</name>
<reference key="1">
    <citation type="journal article" date="2005" name="Proc. Natl. Acad. Sci. U.S.A.">
        <title>Complete genome sequence of Vibrio fischeri: a symbiotic bacterium with pathogenic congeners.</title>
        <authorList>
            <person name="Ruby E.G."/>
            <person name="Urbanowski M."/>
            <person name="Campbell J."/>
            <person name="Dunn A."/>
            <person name="Faini M."/>
            <person name="Gunsalus R."/>
            <person name="Lostroh P."/>
            <person name="Lupp C."/>
            <person name="McCann J."/>
            <person name="Millikan D."/>
            <person name="Schaefer A."/>
            <person name="Stabb E."/>
            <person name="Stevens A."/>
            <person name="Visick K."/>
            <person name="Whistler C."/>
            <person name="Greenberg E.P."/>
        </authorList>
    </citation>
    <scope>NUCLEOTIDE SEQUENCE [LARGE SCALE GENOMIC DNA]</scope>
    <source>
        <strain>ATCC 700601 / ES114</strain>
    </source>
</reference>